<organism>
    <name type="scientific">Influenza A virus (strain A/Equine/Cambridge/1/1973 H7N7)</name>
    <dbReference type="NCBI Taxonomy" id="217835"/>
    <lineage>
        <taxon>Viruses</taxon>
        <taxon>Riboviria</taxon>
        <taxon>Orthornavirae</taxon>
        <taxon>Negarnaviricota</taxon>
        <taxon>Polyploviricotina</taxon>
        <taxon>Insthoviricetes</taxon>
        <taxon>Articulavirales</taxon>
        <taxon>Orthomyxoviridae</taxon>
        <taxon>Alphainfluenzavirus</taxon>
        <taxon>Alphainfluenzavirus influenzae</taxon>
        <taxon>Influenza A virus</taxon>
    </lineage>
</organism>
<comment type="function">
    <text>Binds to sialic acid-containing receptors on the cell surface, bringing about the attachment of the virus particle to the cell. This attachment induces virion internalization of about two third of the virus particles through clathrin-dependent endocytosis and about one third through a clathrin- and caveolin-independent pathway. Plays a major role in the determination of host range restriction and virulence. Class I viral fusion protein. Responsible for penetration of the virus into the cell cytoplasm by mediating the fusion of the membrane of the endocytosed virus particle with the endosomal membrane. Low pH in endosomes induces an irreversible conformational change in HA2, releasing the fusion hydrophobic peptide. Several trimers are required to form a competent fusion pore.</text>
</comment>
<comment type="function">
    <text evidence="1">Binds to sialic acid-containing receptors on the cell surface, bringing about the attachment of the virus particle to the cell. This attachment induces virion internalization either through clathrin-dependent endocytosis or through clathrin- and caveolin-independent pathway. Plays a major role in the determination of host range restriction and virulence. Class I viral fusion protein. Responsible for penetration of the virus into the cell cytoplasm by mediating the fusion of the membrane of the endocytosed virus particle with the endosomal membrane. Low pH in endosomes induces an irreversible conformational change in HA2, releasing the fusion hydrophobic peptide. Several trimers are required to form a competent fusion pore.</text>
</comment>
<comment type="subunit">
    <text evidence="1">Homotrimer of disulfide-linked HA1-HA2.</text>
</comment>
<comment type="subcellular location">
    <subcellularLocation>
        <location evidence="1">Virion membrane</location>
        <topology evidence="1">Single-pass type I membrane protein</topology>
    </subcellularLocation>
    <subcellularLocation>
        <location evidence="1">Host apical cell membrane</location>
        <topology evidence="1">Single-pass type I membrane protein</topology>
    </subcellularLocation>
    <text evidence="1">Targeted to the apical plasma membrane in epithelial polarized cells through a signal present in the transmembrane domain. Associated with glycosphingolipid- and cholesterol-enriched detergent-resistant lipid rafts.</text>
</comment>
<comment type="PTM">
    <text evidence="1">Palmitoylated.</text>
</comment>
<comment type="PTM">
    <text evidence="1">In natural infection, inactive HA is matured into HA1 and HA2 outside the cell by one or more trypsin-like, arginine-specific endoprotease secreted by the bronchial epithelial cells. One identified protease that may be involved in this process is secreted in lungs by club cells.</text>
</comment>
<comment type="miscellaneous">
    <text>Major glycoprotein, comprises over 80% of the envelope proteins present in virus particle.</text>
</comment>
<comment type="miscellaneous">
    <text>The extent of infection into host organism is determined by HA. Influenza viruses bud from the apical surface of polarized epithelial cells (e.g. bronchial epithelial cells) into lumen of lungs and are therefore usually pneumotropic. The reason is that HA is cleaved by tryptase clara which is restricted to lungs. However, HAs of H5 and H7 pantropic avian viruses subtypes can be cleaved by furin and subtilisin-type enzymes, allowing the virus to grow in other organs than lungs.</text>
</comment>
<comment type="miscellaneous">
    <text evidence="2">The influenza A genome consist of 8 RNA segments. Genetic variation of hemagglutinin and/or neuraminidase genes results in the emergence of new influenza strains. The mechanism of variation can be the result of point mutations or the result of genetic reassortment between segments of two different strains.</text>
</comment>
<comment type="similarity">
    <text evidence="1">Belongs to the influenza viruses hemagglutinin family.</text>
</comment>
<evidence type="ECO:0000255" key="1">
    <source>
        <dbReference type="HAMAP-Rule" id="MF_04072"/>
    </source>
</evidence>
<evidence type="ECO:0000305" key="2"/>
<name>HEMA_I73A1</name>
<proteinExistence type="inferred from homology"/>
<protein>
    <recommendedName>
        <fullName evidence="1">Hemagglutinin</fullName>
    </recommendedName>
    <component>
        <recommendedName>
            <fullName evidence="1">Hemagglutinin HA1 chain</fullName>
        </recommendedName>
    </component>
    <component>
        <recommendedName>
            <fullName evidence="1">Hemagglutinin HA2 chain</fullName>
        </recommendedName>
    </component>
</protein>
<feature type="signal peptide" evidence="1">
    <location>
        <begin position="1"/>
        <end position="18"/>
    </location>
</feature>
<feature type="chain" id="PRO_0000440434" description="Hemagglutinin" evidence="1">
    <location>
        <begin position="19"/>
        <end position="570"/>
    </location>
</feature>
<feature type="chain" id="PRO_0000038970" description="Hemagglutinin HA1 chain" evidence="1">
    <location>
        <begin position="19"/>
        <end position="348"/>
    </location>
</feature>
<feature type="chain" id="PRO_0000038971" description="Hemagglutinin HA2 chain" evidence="1">
    <location>
        <begin position="350"/>
        <end position="570"/>
    </location>
</feature>
<feature type="topological domain" description="Extracellular" evidence="1">
    <location>
        <begin position="19"/>
        <end position="533"/>
    </location>
</feature>
<feature type="transmembrane region" description="Helical" evidence="1">
    <location>
        <begin position="534"/>
        <end position="554"/>
    </location>
</feature>
<feature type="topological domain" description="Cytoplasmic" evidence="1">
    <location>
        <begin position="555"/>
        <end position="570"/>
    </location>
</feature>
<feature type="site" description="Cleavage; by host" evidence="1">
    <location>
        <begin position="349"/>
        <end position="350"/>
    </location>
</feature>
<feature type="lipid moiety-binding region" description="S-palmitoyl cysteine; by host" evidence="1">
    <location>
        <position position="566"/>
    </location>
</feature>
<feature type="lipid moiety-binding region" description="S-palmitoyl cysteine; by host" evidence="1">
    <location>
        <position position="569"/>
    </location>
</feature>
<feature type="glycosylation site" description="N-linked (GlcNAc...) asparagine; by host" evidence="1">
    <location>
        <position position="30"/>
    </location>
</feature>
<feature type="glycosylation site" description="N-linked (GlcNAc...) asparagine; by host" evidence="1">
    <location>
        <position position="46"/>
    </location>
</feature>
<feature type="glycosylation site" description="N-linked (GlcNAc...) asparagine; by host" evidence="1">
    <location>
        <position position="249"/>
    </location>
</feature>
<feature type="glycosylation site" description="N-linked (GlcNAc...) asparagine; by host" evidence="1">
    <location>
        <position position="335"/>
    </location>
</feature>
<feature type="glycosylation site" description="N-linked (GlcNAc...) asparagine; by host" evidence="1">
    <location>
        <position position="431"/>
    </location>
</feature>
<feature type="glycosylation site" description="N-linked (GlcNAc...) asparagine; by host" evidence="1">
    <location>
        <position position="503"/>
    </location>
</feature>
<feature type="disulfide bond" description="Interchain (between HA1 and HA2 chains)" evidence="1">
    <location>
        <begin position="22"/>
        <end position="486"/>
    </location>
</feature>
<feature type="disulfide bond" evidence="1">
    <location>
        <begin position="60"/>
        <end position="286"/>
    </location>
</feature>
<feature type="disulfide bond" evidence="1">
    <location>
        <begin position="72"/>
        <end position="84"/>
    </location>
</feature>
<feature type="disulfide bond" evidence="1">
    <location>
        <begin position="105"/>
        <end position="147"/>
    </location>
</feature>
<feature type="disulfide bond" evidence="1">
    <location>
        <begin position="290"/>
        <end position="314"/>
    </location>
</feature>
<feature type="disulfide bond" evidence="1">
    <location>
        <begin position="493"/>
        <end position="497"/>
    </location>
</feature>
<gene>
    <name evidence="1" type="primary">HA</name>
</gene>
<reference key="1">
    <citation type="journal article" date="1992" name="Virus Res.">
        <title>Sequence analysis of the equine H7 influenza virus haemagglutinin gene.</title>
        <authorList>
            <person name="Gibson C.A."/>
            <person name="Daniels R.S."/>
            <person name="Oxford J.S."/>
            <person name="McCauley J.W."/>
        </authorList>
    </citation>
    <scope>NUCLEOTIDE SEQUENCE [GENOMIC RNA]</scope>
</reference>
<dbReference type="EMBL" id="X62558">
    <property type="protein sequence ID" value="CAA44435.1"/>
    <property type="molecule type" value="Genomic_RNA"/>
</dbReference>
<dbReference type="PIR" id="S22015">
    <property type="entry name" value="S22015"/>
</dbReference>
<dbReference type="SMR" id="P26095"/>
<dbReference type="GlyCosmos" id="P26095">
    <property type="glycosylation" value="6 sites, No reported glycans"/>
</dbReference>
<dbReference type="GO" id="GO:0020002">
    <property type="term" value="C:host cell plasma membrane"/>
    <property type="evidence" value="ECO:0007669"/>
    <property type="project" value="UniProtKB-SubCell"/>
</dbReference>
<dbReference type="GO" id="GO:0016020">
    <property type="term" value="C:membrane"/>
    <property type="evidence" value="ECO:0007669"/>
    <property type="project" value="UniProtKB-UniRule"/>
</dbReference>
<dbReference type="GO" id="GO:0019031">
    <property type="term" value="C:viral envelope"/>
    <property type="evidence" value="ECO:0007669"/>
    <property type="project" value="UniProtKB-UniRule"/>
</dbReference>
<dbReference type="GO" id="GO:0055036">
    <property type="term" value="C:virion membrane"/>
    <property type="evidence" value="ECO:0007669"/>
    <property type="project" value="UniProtKB-SubCell"/>
</dbReference>
<dbReference type="GO" id="GO:0046789">
    <property type="term" value="F:host cell surface receptor binding"/>
    <property type="evidence" value="ECO:0007669"/>
    <property type="project" value="UniProtKB-UniRule"/>
</dbReference>
<dbReference type="GO" id="GO:0075512">
    <property type="term" value="P:clathrin-dependent endocytosis of virus by host cell"/>
    <property type="evidence" value="ECO:0007669"/>
    <property type="project" value="UniProtKB-UniRule"/>
</dbReference>
<dbReference type="GO" id="GO:0039654">
    <property type="term" value="P:fusion of virus membrane with host endosome membrane"/>
    <property type="evidence" value="ECO:0007669"/>
    <property type="project" value="UniProtKB-UniRule"/>
</dbReference>
<dbReference type="GO" id="GO:0019064">
    <property type="term" value="P:fusion of virus membrane with host plasma membrane"/>
    <property type="evidence" value="ECO:0007669"/>
    <property type="project" value="InterPro"/>
</dbReference>
<dbReference type="GO" id="GO:0046761">
    <property type="term" value="P:viral budding from plasma membrane"/>
    <property type="evidence" value="ECO:0007669"/>
    <property type="project" value="UniProtKB-UniRule"/>
</dbReference>
<dbReference type="GO" id="GO:0019062">
    <property type="term" value="P:virion attachment to host cell"/>
    <property type="evidence" value="ECO:0007669"/>
    <property type="project" value="UniProtKB-KW"/>
</dbReference>
<dbReference type="Gene3D" id="3.90.20.10">
    <property type="match status" value="1"/>
</dbReference>
<dbReference type="Gene3D" id="3.90.209.20">
    <property type="match status" value="1"/>
</dbReference>
<dbReference type="HAMAP" id="MF_04072">
    <property type="entry name" value="INFV_HEMA"/>
    <property type="match status" value="1"/>
</dbReference>
<dbReference type="InterPro" id="IPR008980">
    <property type="entry name" value="Capsid_hemagglutn"/>
</dbReference>
<dbReference type="InterPro" id="IPR013828">
    <property type="entry name" value="Hemagglutn_HA1_a/b_dom_sf"/>
</dbReference>
<dbReference type="InterPro" id="IPR000149">
    <property type="entry name" value="Hemagglutn_influenz_A"/>
</dbReference>
<dbReference type="InterPro" id="IPR001364">
    <property type="entry name" value="Hemagglutn_influenz_A/B"/>
</dbReference>
<dbReference type="Pfam" id="PF00509">
    <property type="entry name" value="Hemagglutinin"/>
    <property type="match status" value="1"/>
</dbReference>
<dbReference type="PRINTS" id="PR00330">
    <property type="entry name" value="HEMAGGLUTN1"/>
</dbReference>
<dbReference type="PRINTS" id="PR00329">
    <property type="entry name" value="HEMAGGLUTN12"/>
</dbReference>
<dbReference type="SUPFAM" id="SSF58064">
    <property type="entry name" value="Influenza hemagglutinin (stalk)"/>
    <property type="match status" value="1"/>
</dbReference>
<dbReference type="SUPFAM" id="SSF49818">
    <property type="entry name" value="Viral protein domain"/>
    <property type="match status" value="1"/>
</dbReference>
<organismHost>
    <name type="scientific">Aves</name>
    <dbReference type="NCBI Taxonomy" id="8782"/>
</organismHost>
<organismHost>
    <name type="scientific">Equus caballus</name>
    <name type="common">Horse</name>
    <dbReference type="NCBI Taxonomy" id="9796"/>
</organismHost>
<organismHost>
    <name type="scientific">Homo sapiens</name>
    <name type="common">Human</name>
    <dbReference type="NCBI Taxonomy" id="9606"/>
</organismHost>
<organismHost>
    <name type="scientific">Phocidae</name>
    <name type="common">true seals</name>
    <dbReference type="NCBI Taxonomy" id="9709"/>
</organismHost>
<keyword id="KW-1167">Clathrin- and caveolin-independent endocytosis of virus by host</keyword>
<keyword id="KW-1165">Clathrin-mediated endocytosis of virus by host</keyword>
<keyword id="KW-1015">Disulfide bond</keyword>
<keyword id="KW-1170">Fusion of virus membrane with host endosomal membrane</keyword>
<keyword id="KW-1168">Fusion of virus membrane with host membrane</keyword>
<keyword id="KW-0325">Glycoprotein</keyword>
<keyword id="KW-0348">Hemagglutinin</keyword>
<keyword id="KW-1032">Host cell membrane</keyword>
<keyword id="KW-1043">Host membrane</keyword>
<keyword id="KW-0945">Host-virus interaction</keyword>
<keyword id="KW-0449">Lipoprotein</keyword>
<keyword id="KW-0472">Membrane</keyword>
<keyword id="KW-0564">Palmitate</keyword>
<keyword id="KW-0732">Signal</keyword>
<keyword id="KW-0812">Transmembrane</keyword>
<keyword id="KW-1133">Transmembrane helix</keyword>
<keyword id="KW-1161">Viral attachment to host cell</keyword>
<keyword id="KW-0261">Viral envelope protein</keyword>
<keyword id="KW-1162">Viral penetration into host cytoplasm</keyword>
<keyword id="KW-0946">Virion</keyword>
<keyword id="KW-1164">Virus endocytosis by host</keyword>
<keyword id="KW-1160">Virus entry into host cell</keyword>
<accession>P26095</accession>
<sequence>MNTQILILAISAFLCVRADKICLGHHAVSNGTKVDTLTEKGIEVVNATETVEQKNIPKICSKGKQTIDLGQCGLLGTTIGPPQCDQFLEFSANLIIERREGDDICYPGKFDNEETLRQILRKSGGIKKENMGFTYTGVRTNGETSACRRSRSSFYAEMKWLLSNTDNGVFPQMTKSYKNTKREPALIIWGIHHSGSTAEQTRLYGSGNKLITVWSSKYQQSFAPNPGPRPQINGQSGRIDFYWLMLDPNDTVTFSFNGAFIAPDRASFLRGKSLGIQSDAQLDNNCEGECYHIGGTIISNLPFQNINSRAIGKCPRYVKQKSLMLATGMKNVPENSTHKQLTHHMRKKRGLFGAIAGFIENGWEGLIDGWYGYRHQNAQGEGTAADYKSTQSAINQITGKLNRLIEKTNQQFELIDNEFNEIEKQIGNVINWTRDSIIEVWSYNAEFLVAVENQHTIDLTDSEMNKLYEKVRRQLRENAEEDGNGCFEIFHQCDNDCMASIRNNTYDHKKYRKEAIQNRIQIDAVKLSSGYKDIILWFSFGASCFLFLAIAMVLAFICIKNGNMRCTICI</sequence>